<name>ALMT3_ARATH</name>
<keyword id="KW-0407">Ion channel</keyword>
<keyword id="KW-0406">Ion transport</keyword>
<keyword id="KW-0472">Membrane</keyword>
<keyword id="KW-1185">Reference proteome</keyword>
<keyword id="KW-0812">Transmembrane</keyword>
<keyword id="KW-1133">Transmembrane helix</keyword>
<keyword id="KW-0813">Transport</keyword>
<gene>
    <name type="primary">ALMT3</name>
    <name type="ordered locus">At1g18420</name>
    <name type="ORF">F15H18.9</name>
</gene>
<evidence type="ECO:0000250" key="1"/>
<evidence type="ECO:0000255" key="2"/>
<evidence type="ECO:0000305" key="3"/>
<organism>
    <name type="scientific">Arabidopsis thaliana</name>
    <name type="common">Mouse-ear cress</name>
    <dbReference type="NCBI Taxonomy" id="3702"/>
    <lineage>
        <taxon>Eukaryota</taxon>
        <taxon>Viridiplantae</taxon>
        <taxon>Streptophyta</taxon>
        <taxon>Embryophyta</taxon>
        <taxon>Tracheophyta</taxon>
        <taxon>Spermatophyta</taxon>
        <taxon>Magnoliopsida</taxon>
        <taxon>eudicotyledons</taxon>
        <taxon>Gunneridae</taxon>
        <taxon>Pentapetalae</taxon>
        <taxon>rosids</taxon>
        <taxon>malvids</taxon>
        <taxon>Brassicales</taxon>
        <taxon>Brassicaceae</taxon>
        <taxon>Camelineae</taxon>
        <taxon>Arabidopsis</taxon>
    </lineage>
</organism>
<reference key="1">
    <citation type="journal article" date="2000" name="Nature">
        <title>Sequence and analysis of chromosome 1 of the plant Arabidopsis thaliana.</title>
        <authorList>
            <person name="Theologis A."/>
            <person name="Ecker J.R."/>
            <person name="Palm C.J."/>
            <person name="Federspiel N.A."/>
            <person name="Kaul S."/>
            <person name="White O."/>
            <person name="Alonso J."/>
            <person name="Altafi H."/>
            <person name="Araujo R."/>
            <person name="Bowman C.L."/>
            <person name="Brooks S.Y."/>
            <person name="Buehler E."/>
            <person name="Chan A."/>
            <person name="Chao Q."/>
            <person name="Chen H."/>
            <person name="Cheuk R.F."/>
            <person name="Chin C.W."/>
            <person name="Chung M.K."/>
            <person name="Conn L."/>
            <person name="Conway A.B."/>
            <person name="Conway A.R."/>
            <person name="Creasy T.H."/>
            <person name="Dewar K."/>
            <person name="Dunn P."/>
            <person name="Etgu P."/>
            <person name="Feldblyum T.V."/>
            <person name="Feng J.-D."/>
            <person name="Fong B."/>
            <person name="Fujii C.Y."/>
            <person name="Gill J.E."/>
            <person name="Goldsmith A.D."/>
            <person name="Haas B."/>
            <person name="Hansen N.F."/>
            <person name="Hughes B."/>
            <person name="Huizar L."/>
            <person name="Hunter J.L."/>
            <person name="Jenkins J."/>
            <person name="Johnson-Hopson C."/>
            <person name="Khan S."/>
            <person name="Khaykin E."/>
            <person name="Kim C.J."/>
            <person name="Koo H.L."/>
            <person name="Kremenetskaia I."/>
            <person name="Kurtz D.B."/>
            <person name="Kwan A."/>
            <person name="Lam B."/>
            <person name="Langin-Hooper S."/>
            <person name="Lee A."/>
            <person name="Lee J.M."/>
            <person name="Lenz C.A."/>
            <person name="Li J.H."/>
            <person name="Li Y.-P."/>
            <person name="Lin X."/>
            <person name="Liu S.X."/>
            <person name="Liu Z.A."/>
            <person name="Luros J.S."/>
            <person name="Maiti R."/>
            <person name="Marziali A."/>
            <person name="Militscher J."/>
            <person name="Miranda M."/>
            <person name="Nguyen M."/>
            <person name="Nierman W.C."/>
            <person name="Osborne B.I."/>
            <person name="Pai G."/>
            <person name="Peterson J."/>
            <person name="Pham P.K."/>
            <person name="Rizzo M."/>
            <person name="Rooney T."/>
            <person name="Rowley D."/>
            <person name="Sakano H."/>
            <person name="Salzberg S.L."/>
            <person name="Schwartz J.R."/>
            <person name="Shinn P."/>
            <person name="Southwick A.M."/>
            <person name="Sun H."/>
            <person name="Tallon L.J."/>
            <person name="Tambunga G."/>
            <person name="Toriumi M.J."/>
            <person name="Town C.D."/>
            <person name="Utterback T."/>
            <person name="Van Aken S."/>
            <person name="Vaysberg M."/>
            <person name="Vysotskaia V.S."/>
            <person name="Walker M."/>
            <person name="Wu D."/>
            <person name="Yu G."/>
            <person name="Fraser C.M."/>
            <person name="Venter J.C."/>
            <person name="Davis R.W."/>
        </authorList>
    </citation>
    <scope>NUCLEOTIDE SEQUENCE [LARGE SCALE GENOMIC DNA]</scope>
    <source>
        <strain>cv. Columbia</strain>
    </source>
</reference>
<reference key="2">
    <citation type="journal article" date="2017" name="Plant J.">
        <title>Araport11: a complete reannotation of the Arabidopsis thaliana reference genome.</title>
        <authorList>
            <person name="Cheng C.Y."/>
            <person name="Krishnakumar V."/>
            <person name="Chan A.P."/>
            <person name="Thibaud-Nissen F."/>
            <person name="Schobel S."/>
            <person name="Town C.D."/>
        </authorList>
    </citation>
    <scope>GENOME REANNOTATION</scope>
    <source>
        <strain>cv. Columbia</strain>
    </source>
</reference>
<reference key="3">
    <citation type="journal article" date="2006" name="Proc. Natl. Acad. Sci. U.S.A.">
        <title>AtALMT1, which encodes a malate transporter, is identified as one of several genes critical for aluminum tolerance in Arabidopsis.</title>
        <authorList>
            <person name="Hoekenga O.A."/>
            <person name="Maron L.G."/>
            <person name="Pineros M.A."/>
            <person name="Cancado G.M."/>
            <person name="Shaff J."/>
            <person name="Kobayashi Y."/>
            <person name="Ryan P.R."/>
            <person name="Dong B."/>
            <person name="Delhaize E."/>
            <person name="Sasaki T."/>
            <person name="Matsumoto H."/>
            <person name="Yamamoto Y."/>
            <person name="Koyama H."/>
            <person name="Kochian L.V."/>
        </authorList>
    </citation>
    <scope>GENE FAMILY</scope>
    <scope>NOMENCLATURE</scope>
</reference>
<feature type="chain" id="PRO_0000401462" description="Putative aluminum-activated malate transporter 3">
    <location>
        <begin position="1"/>
        <end position="581"/>
    </location>
</feature>
<feature type="transmembrane region" description="Helical" evidence="2">
    <location>
        <begin position="98"/>
        <end position="118"/>
    </location>
</feature>
<feature type="transmembrane region" description="Helical" evidence="2">
    <location>
        <begin position="122"/>
        <end position="142"/>
    </location>
</feature>
<feature type="transmembrane region" description="Helical" evidence="2">
    <location>
        <begin position="148"/>
        <end position="164"/>
    </location>
</feature>
<feature type="transmembrane region" description="Helical" evidence="2">
    <location>
        <begin position="167"/>
        <end position="187"/>
    </location>
</feature>
<feature type="transmembrane region" description="Helical" evidence="2">
    <location>
        <begin position="201"/>
        <end position="218"/>
    </location>
</feature>
<feature type="transmembrane region" description="Helical" evidence="2">
    <location>
        <begin position="231"/>
        <end position="251"/>
    </location>
</feature>
<proteinExistence type="inferred from homology"/>
<comment type="function">
    <text evidence="1">Malate transporter.</text>
</comment>
<comment type="subcellular location">
    <subcellularLocation>
        <location evidence="3">Membrane</location>
        <topology evidence="3">Multi-pass membrane protein</topology>
    </subcellularLocation>
</comment>
<comment type="similarity">
    <text evidence="3">Belongs to the aromatic acid exporter (TC 2.A.85) family.</text>
</comment>
<accession>Q9LPQ8</accession>
<sequence length="581" mass="64911">MAAPKLESFRRGSMFDGSFRRGSMFDGSFRQSMRDRLILQSRGYSNVNDDDKTSVRCCSYSYFSDKITGVVKKLKDVLVTAWEMGTADPRKMIFSAKMGLALTLTSILIFFKIPGLELSGHYLWAILTVVVIFEFSIGATFSKGCNRGLGTLSAGGLALGMSWISEMTGNWADVFNAASIFVVAFFATYAKLYPTMKPYEYGFRVFLLTYCYVIVSGYKTGEFMETAVSRFLLIALGASVGLIVNTCIYPIWAGEDLHNLVAKNFVNVATSLEGCVNGYLECVAYDTIPSRILVYEAVAEDPVYSGYRSAVQSTSQEDTLMSFASWEPPHGPYKSFRYPWALYVKVGGALRHCAIMVMALHGCILSEIQAAEDRRREFRNELQRVGIEGAKVLRYIGESLKKMEKLNPIEDILYEIHQAAEELQSKIDKKSYLLVNAKNWEIGNRPRVRDLTDEQKISNLDSDLSRILAHKSQSEATLRPPKNWDDVTTAANLSSATMLPYLQSRTMIHKQPSWPSRISITPGSMLQPPLGEPGKMYESASNLSLATFASLLIEFVARLENLVNAYDELSVKANFKEAVSE</sequence>
<protein>
    <recommendedName>
        <fullName>Putative aluminum-activated malate transporter 3</fullName>
        <shortName>AtALMT3</shortName>
    </recommendedName>
</protein>
<dbReference type="EMBL" id="AC013354">
    <property type="protein sequence ID" value="AAF25997.1"/>
    <property type="molecule type" value="Genomic_DNA"/>
</dbReference>
<dbReference type="EMBL" id="CP002684">
    <property type="protein sequence ID" value="AEE29713.1"/>
    <property type="molecule type" value="Genomic_DNA"/>
</dbReference>
<dbReference type="PIR" id="B86318">
    <property type="entry name" value="B86318"/>
</dbReference>
<dbReference type="RefSeq" id="NP_173278.1">
    <property type="nucleotide sequence ID" value="NM_101700.1"/>
</dbReference>
<dbReference type="SMR" id="Q9LPQ8"/>
<dbReference type="STRING" id="3702.Q9LPQ8"/>
<dbReference type="TCDB" id="2.A.85.2.6">
    <property type="family name" value="the aromatic acid exporter (arae) family"/>
</dbReference>
<dbReference type="GlyGen" id="Q9LPQ8">
    <property type="glycosylation" value="1 site"/>
</dbReference>
<dbReference type="iPTMnet" id="Q9LPQ8"/>
<dbReference type="PaxDb" id="3702-AT1G18420.1"/>
<dbReference type="ProteomicsDB" id="244939"/>
<dbReference type="EnsemblPlants" id="AT1G18420.1">
    <property type="protein sequence ID" value="AT1G18420.1"/>
    <property type="gene ID" value="AT1G18420"/>
</dbReference>
<dbReference type="GeneID" id="838423"/>
<dbReference type="Gramene" id="AT1G18420.1">
    <property type="protein sequence ID" value="AT1G18420.1"/>
    <property type="gene ID" value="AT1G18420"/>
</dbReference>
<dbReference type="KEGG" id="ath:AT1G18420"/>
<dbReference type="Araport" id="AT1G18420"/>
<dbReference type="TAIR" id="AT1G18420">
    <property type="gene designation" value="ALMT3"/>
</dbReference>
<dbReference type="eggNOG" id="KOG4711">
    <property type="taxonomic scope" value="Eukaryota"/>
</dbReference>
<dbReference type="HOGENOM" id="CLU_020841_1_2_1"/>
<dbReference type="InParanoid" id="Q9LPQ8"/>
<dbReference type="OrthoDB" id="68611at2759"/>
<dbReference type="PhylomeDB" id="Q9LPQ8"/>
<dbReference type="PRO" id="PR:Q9LPQ8"/>
<dbReference type="Proteomes" id="UP000006548">
    <property type="component" value="Chromosome 1"/>
</dbReference>
<dbReference type="ExpressionAtlas" id="Q9LPQ8">
    <property type="expression patterns" value="baseline and differential"/>
</dbReference>
<dbReference type="GO" id="GO:0016020">
    <property type="term" value="C:membrane"/>
    <property type="evidence" value="ECO:0007669"/>
    <property type="project" value="UniProtKB-SubCell"/>
</dbReference>
<dbReference type="GO" id="GO:0035618">
    <property type="term" value="C:root hair"/>
    <property type="evidence" value="ECO:0000314"/>
    <property type="project" value="TAIR"/>
</dbReference>
<dbReference type="GO" id="GO:0016036">
    <property type="term" value="P:cellular response to phosphate starvation"/>
    <property type="evidence" value="ECO:0000315"/>
    <property type="project" value="TAIR"/>
</dbReference>
<dbReference type="GO" id="GO:0071423">
    <property type="term" value="P:malate transmembrane transport"/>
    <property type="evidence" value="ECO:0000315"/>
    <property type="project" value="TAIR"/>
</dbReference>
<dbReference type="GO" id="GO:0034220">
    <property type="term" value="P:monoatomic ion transmembrane transport"/>
    <property type="evidence" value="ECO:0007669"/>
    <property type="project" value="UniProtKB-KW"/>
</dbReference>
<dbReference type="InterPro" id="IPR020966">
    <property type="entry name" value="ALMT"/>
</dbReference>
<dbReference type="PANTHER" id="PTHR31086">
    <property type="entry name" value="ALUMINUM-ACTIVATED MALATE TRANSPORTER 10"/>
    <property type="match status" value="1"/>
</dbReference>
<dbReference type="Pfam" id="PF11744">
    <property type="entry name" value="ALMT"/>
    <property type="match status" value="1"/>
</dbReference>